<accession>C1EZE4</accession>
<evidence type="ECO:0000255" key="1">
    <source>
        <dbReference type="HAMAP-Rule" id="MF_01249"/>
    </source>
</evidence>
<reference key="1">
    <citation type="submission" date="2009-02" db="EMBL/GenBank/DDBJ databases">
        <title>Genome sequence of Bacillus cereus 03BB102.</title>
        <authorList>
            <person name="Dodson R.J."/>
            <person name="Jackson P."/>
            <person name="Munk A.C."/>
            <person name="Brettin T."/>
            <person name="Bruce D."/>
            <person name="Detter C."/>
            <person name="Tapia R."/>
            <person name="Han C."/>
            <person name="Sutton G."/>
            <person name="Sims D."/>
        </authorList>
    </citation>
    <scope>NUCLEOTIDE SEQUENCE [LARGE SCALE GENOMIC DNA]</scope>
    <source>
        <strain>03BB102</strain>
    </source>
</reference>
<dbReference type="EC" id="2.7.11.-" evidence="1"/>
<dbReference type="EC" id="2.7.4.-" evidence="1"/>
<dbReference type="EMBL" id="CP001407">
    <property type="protein sequence ID" value="ACO30156.1"/>
    <property type="molecule type" value="Genomic_DNA"/>
</dbReference>
<dbReference type="RefSeq" id="WP_001127244.1">
    <property type="nucleotide sequence ID" value="NZ_CP009318.1"/>
</dbReference>
<dbReference type="SMR" id="C1EZE4"/>
<dbReference type="GeneID" id="45024995"/>
<dbReference type="KEGG" id="bcx:BCA_5291"/>
<dbReference type="PATRIC" id="fig|572264.18.peg.5214"/>
<dbReference type="Proteomes" id="UP000002210">
    <property type="component" value="Chromosome"/>
</dbReference>
<dbReference type="GO" id="GO:0005524">
    <property type="term" value="F:ATP binding"/>
    <property type="evidence" value="ECO:0007669"/>
    <property type="project" value="UniProtKB-UniRule"/>
</dbReference>
<dbReference type="GO" id="GO:0000287">
    <property type="term" value="F:magnesium ion binding"/>
    <property type="evidence" value="ECO:0007669"/>
    <property type="project" value="UniProtKB-UniRule"/>
</dbReference>
<dbReference type="GO" id="GO:0000155">
    <property type="term" value="F:phosphorelay sensor kinase activity"/>
    <property type="evidence" value="ECO:0007669"/>
    <property type="project" value="InterPro"/>
</dbReference>
<dbReference type="GO" id="GO:0004674">
    <property type="term" value="F:protein serine/threonine kinase activity"/>
    <property type="evidence" value="ECO:0007669"/>
    <property type="project" value="UniProtKB-KW"/>
</dbReference>
<dbReference type="GO" id="GO:0004712">
    <property type="term" value="F:protein serine/threonine/tyrosine kinase activity"/>
    <property type="evidence" value="ECO:0007669"/>
    <property type="project" value="UniProtKB-UniRule"/>
</dbReference>
<dbReference type="GO" id="GO:0006109">
    <property type="term" value="P:regulation of carbohydrate metabolic process"/>
    <property type="evidence" value="ECO:0007669"/>
    <property type="project" value="UniProtKB-UniRule"/>
</dbReference>
<dbReference type="CDD" id="cd01918">
    <property type="entry name" value="HprK_C"/>
    <property type="match status" value="1"/>
</dbReference>
<dbReference type="FunFam" id="3.40.1390.20:FF:000002">
    <property type="entry name" value="HPr kinase/phosphorylase"/>
    <property type="match status" value="1"/>
</dbReference>
<dbReference type="FunFam" id="3.40.50.300:FF:000174">
    <property type="entry name" value="HPr kinase/phosphorylase"/>
    <property type="match status" value="1"/>
</dbReference>
<dbReference type="Gene3D" id="3.40.1390.20">
    <property type="entry name" value="HprK N-terminal domain-like"/>
    <property type="match status" value="1"/>
</dbReference>
<dbReference type="Gene3D" id="3.40.50.300">
    <property type="entry name" value="P-loop containing nucleotide triphosphate hydrolases"/>
    <property type="match status" value="1"/>
</dbReference>
<dbReference type="HAMAP" id="MF_01249">
    <property type="entry name" value="HPr_kinase"/>
    <property type="match status" value="1"/>
</dbReference>
<dbReference type="InterPro" id="IPR003755">
    <property type="entry name" value="HPr(Ser)_kin/Pase"/>
</dbReference>
<dbReference type="InterPro" id="IPR011104">
    <property type="entry name" value="Hpr_kin/Pase_C"/>
</dbReference>
<dbReference type="InterPro" id="IPR011126">
    <property type="entry name" value="Hpr_kin/Pase_Hpr_N"/>
</dbReference>
<dbReference type="InterPro" id="IPR027417">
    <property type="entry name" value="P-loop_NTPase"/>
</dbReference>
<dbReference type="InterPro" id="IPR028979">
    <property type="entry name" value="Ser_kin/Pase_Hpr-like_N_sf"/>
</dbReference>
<dbReference type="NCBIfam" id="TIGR00679">
    <property type="entry name" value="hpr-ser"/>
    <property type="match status" value="1"/>
</dbReference>
<dbReference type="PANTHER" id="PTHR30305:SF1">
    <property type="entry name" value="HPR KINASE_PHOSPHORYLASE"/>
    <property type="match status" value="1"/>
</dbReference>
<dbReference type="PANTHER" id="PTHR30305">
    <property type="entry name" value="PROTEIN YJDM-RELATED"/>
    <property type="match status" value="1"/>
</dbReference>
<dbReference type="Pfam" id="PF07475">
    <property type="entry name" value="Hpr_kinase_C"/>
    <property type="match status" value="1"/>
</dbReference>
<dbReference type="Pfam" id="PF02603">
    <property type="entry name" value="Hpr_kinase_N"/>
    <property type="match status" value="1"/>
</dbReference>
<dbReference type="SUPFAM" id="SSF75138">
    <property type="entry name" value="HprK N-terminal domain-like"/>
    <property type="match status" value="1"/>
</dbReference>
<dbReference type="SUPFAM" id="SSF53795">
    <property type="entry name" value="PEP carboxykinase-like"/>
    <property type="match status" value="1"/>
</dbReference>
<comment type="function">
    <text evidence="1">Catalyzes the ATP- as well as the pyrophosphate-dependent phosphorylation of a specific serine residue in HPr, a phosphocarrier protein of the phosphoenolpyruvate-dependent sugar phosphotransferase system (PTS). HprK/P also catalyzes the pyrophosphate-producing, inorganic phosphate-dependent dephosphorylation (phosphorolysis) of seryl-phosphorylated HPr (P-Ser-HPr). The two antagonistic activities of HprK/P are regulated by several intracellular metabolites, which change their concentration in response to the absence or presence of rapidly metabolisable carbon sources (glucose, fructose, etc.) in the growth medium. Also phosphorylates/dephosphorylates the HPr-like catabolite repression protein crh on a specific serine residue. Therefore, by controlling the phosphorylation state of HPr and crh, HPrK/P is a sensor enzyme that plays a major role in the regulation of carbon metabolism and sugar transport: it mediates carbon catabolite repression (CCR), and regulates PTS-catalyzed carbohydrate uptake and inducer exclusion.</text>
</comment>
<comment type="catalytic activity">
    <reaction evidence="1">
        <text>[HPr protein]-L-serine + ATP = [HPr protein]-O-phospho-L-serine + ADP + H(+)</text>
        <dbReference type="Rhea" id="RHEA:46600"/>
        <dbReference type="Rhea" id="RHEA-COMP:11602"/>
        <dbReference type="Rhea" id="RHEA-COMP:11603"/>
        <dbReference type="ChEBI" id="CHEBI:15378"/>
        <dbReference type="ChEBI" id="CHEBI:29999"/>
        <dbReference type="ChEBI" id="CHEBI:30616"/>
        <dbReference type="ChEBI" id="CHEBI:83421"/>
        <dbReference type="ChEBI" id="CHEBI:456216"/>
    </reaction>
</comment>
<comment type="catalytic activity">
    <reaction evidence="1">
        <text>[HPr protein]-O-phospho-L-serine + phosphate + H(+) = [HPr protein]-L-serine + diphosphate</text>
        <dbReference type="Rhea" id="RHEA:46604"/>
        <dbReference type="Rhea" id="RHEA-COMP:11602"/>
        <dbReference type="Rhea" id="RHEA-COMP:11603"/>
        <dbReference type="ChEBI" id="CHEBI:15378"/>
        <dbReference type="ChEBI" id="CHEBI:29999"/>
        <dbReference type="ChEBI" id="CHEBI:33019"/>
        <dbReference type="ChEBI" id="CHEBI:43474"/>
        <dbReference type="ChEBI" id="CHEBI:83421"/>
    </reaction>
</comment>
<comment type="cofactor">
    <cofactor evidence="1">
        <name>Mg(2+)</name>
        <dbReference type="ChEBI" id="CHEBI:18420"/>
    </cofactor>
</comment>
<comment type="subunit">
    <text evidence="1">Homohexamer.</text>
</comment>
<comment type="domain">
    <text evidence="1">The Walker A ATP-binding motif also binds Pi and PPi.</text>
</comment>
<comment type="miscellaneous">
    <text evidence="1">Both phosphorylation and phosphorolysis are carried out by the same active site and suggest a common mechanism for both reactions.</text>
</comment>
<comment type="similarity">
    <text evidence="1">Belongs to the HPrK/P family.</text>
</comment>
<proteinExistence type="inferred from homology"/>
<protein>
    <recommendedName>
        <fullName evidence="1">HPr kinase/phosphorylase</fullName>
        <shortName evidence="1">HPrK/P</shortName>
        <ecNumber evidence="1">2.7.11.-</ecNumber>
        <ecNumber evidence="1">2.7.4.-</ecNumber>
    </recommendedName>
    <alternativeName>
        <fullName evidence="1">HPr(Ser) kinase/phosphorylase</fullName>
    </alternativeName>
</protein>
<keyword id="KW-0067">ATP-binding</keyword>
<keyword id="KW-0119">Carbohydrate metabolism</keyword>
<keyword id="KW-0418">Kinase</keyword>
<keyword id="KW-0460">Magnesium</keyword>
<keyword id="KW-0479">Metal-binding</keyword>
<keyword id="KW-0511">Multifunctional enzyme</keyword>
<keyword id="KW-0547">Nucleotide-binding</keyword>
<keyword id="KW-0723">Serine/threonine-protein kinase</keyword>
<keyword id="KW-0808">Transferase</keyword>
<organism>
    <name type="scientific">Bacillus cereus (strain 03BB102)</name>
    <dbReference type="NCBI Taxonomy" id="572264"/>
    <lineage>
        <taxon>Bacteria</taxon>
        <taxon>Bacillati</taxon>
        <taxon>Bacillota</taxon>
        <taxon>Bacilli</taxon>
        <taxon>Bacillales</taxon>
        <taxon>Bacillaceae</taxon>
        <taxon>Bacillus</taxon>
        <taxon>Bacillus cereus group</taxon>
    </lineage>
</organism>
<sequence>MPKVRTKDLIEQFQLELISGEEGIHRPIDTSDLSRPGIEMAGFFTYYPADRVQLLGKTELTFFDTLTSDQKQERMKALCTEETPCIIVTRNQDVPDELLQASRESGMPLLRSSQTTTRLSSRLTNYLEGKLAPTTAVHGVLVDIYGVGVLITGQSGVGKSETALELVKRGHRLVADDSVEIRQEDEDMLVGSSPDLIEHLLEIRGLGIINVMTLFGAGAVRNYKRITLVINLEIWDQKKNYDRLGLDEEKMKIIDTELTKITLPVRPGRNLAVIIEVAAMNFRLKRMGVNAAQQFSERLMSAIELGNQE</sequence>
<feature type="chain" id="PRO_1000165068" description="HPr kinase/phosphorylase">
    <location>
        <begin position="1"/>
        <end position="309"/>
    </location>
</feature>
<feature type="region of interest" description="Important for the catalytic mechanism of both phosphorylation and dephosphorylation" evidence="1">
    <location>
        <begin position="201"/>
        <end position="210"/>
    </location>
</feature>
<feature type="region of interest" description="Important for the catalytic mechanism of dephosphorylation" evidence="1">
    <location>
        <begin position="264"/>
        <end position="269"/>
    </location>
</feature>
<feature type="active site" evidence="1">
    <location>
        <position position="138"/>
    </location>
</feature>
<feature type="active site" evidence="1">
    <location>
        <position position="159"/>
    </location>
</feature>
<feature type="active site" description="Proton acceptor; for phosphorylation activity. Proton donor; for dephosphorylation activity" evidence="1">
    <location>
        <position position="177"/>
    </location>
</feature>
<feature type="active site" evidence="1">
    <location>
        <position position="243"/>
    </location>
</feature>
<feature type="binding site" evidence="1">
    <location>
        <begin position="153"/>
        <end position="160"/>
    </location>
    <ligand>
        <name>ATP</name>
        <dbReference type="ChEBI" id="CHEBI:30616"/>
    </ligand>
</feature>
<feature type="binding site" evidence="1">
    <location>
        <position position="160"/>
    </location>
    <ligand>
        <name>Mg(2+)</name>
        <dbReference type="ChEBI" id="CHEBI:18420"/>
    </ligand>
</feature>
<feature type="binding site" evidence="1">
    <location>
        <position position="202"/>
    </location>
    <ligand>
        <name>Mg(2+)</name>
        <dbReference type="ChEBI" id="CHEBI:18420"/>
    </ligand>
</feature>
<name>HPRK_BACC3</name>
<gene>
    <name evidence="1" type="primary">hprK</name>
    <name type="ordered locus">BCA_5291</name>
</gene>